<name>BRF2_HUMAN</name>
<comment type="function">
    <text evidence="3 4 5 14">General activator of RNA polymerase III transcription. Factor exclusively required for RNA polymerase III transcription of genes with promoter elements upstream of the initiation sites (PubMed:11040218, PubMed:11121026, PubMed:11564744, PubMed:26638071). Contributes to the regulation of gene expression; functions as activator in the absence of oxidative stress (PubMed:26638071). Down-regulates expression of target genes in response to oxidative stress (PubMed:26638071). Overexpression protects cells against apoptosis in response to oxidative stress (PubMed:26638071).</text>
</comment>
<comment type="subunit">
    <text evidence="5 6 7 8 9 10 11 12 14">Component of TFIIIB complexes. The TFIIIB complex has two activities, alpha and beta. The TFIIIB-alpha activity complex is composed of TBP, BDP1, and a complex containing both BRF2 and at least four stably associated proteins; this complex inhibits the transcription by pol III via its phosphorylation by CK2; YY1 facilitates the TFIIIB-alpha complex formation. Interacts with TBP; this interaction promotes recruitment of BRF2 to TATA box-containing promoters (PubMed:26638071). Interacts with TBP and the BURE sequence (GC-rich sequence downstream from the TATA box) to form a strong ternary complex which is joined by BDP1; this ternary complex stimulates pol III transcription. Forms a trimeric complex composed of TBP, BRF2 and mini-SNAPc complex (SNAP43, SNAP50, and the N-terminal third of SNAP190) on the promoter. Assembly of the TBP-BRF2 complex is stimulated by SNAP190. Interacts with MAF1 and SNAPC4.</text>
</comment>
<comment type="interaction">
    <interactant intactId="EBI-1055224">
        <id>Q9HAW0</id>
    </interactant>
    <interactant intactId="EBI-702484">
        <id>P14923</id>
        <label>JUP</label>
    </interactant>
    <organismsDiffer>false</organismsDiffer>
    <experiments>2</experiments>
</comment>
<comment type="subcellular location">
    <subcellularLocation>
        <location evidence="12">Nucleus</location>
    </subcellularLocation>
</comment>
<comment type="alternative products">
    <event type="alternative splicing"/>
    <isoform>
        <id>Q9HAW0-1</id>
        <name>1</name>
        <sequence type="displayed"/>
    </isoform>
    <isoform>
        <id>Q9HAW0-2</id>
        <name>2</name>
        <sequence type="described" ref="VSP_056834"/>
    </isoform>
</comment>
<comment type="induction">
    <text evidence="13">Down-regulated by epigallocatechin gallate (EGCG) treatment.</text>
</comment>
<comment type="PTM">
    <text evidence="14">In response to oxidative stress, Cys-361 is reversibly oxidized to cysteine sulfenic acid. Oxidation of Cys-361 impairs formation of a ternary complex with TBP and DNA and down-regulates expression of target genes in response to oxidative stress.</text>
</comment>
<comment type="similarity">
    <text evidence="18">Belongs to the TFIIB family.</text>
</comment>
<comment type="sequence caution" evidence="18">
    <conflict type="erroneous initiation">
        <sequence resource="EMBL-CDS" id="AAG35486"/>
    </conflict>
</comment>
<protein>
    <recommendedName>
        <fullName>Transcription factor IIIB 50 kDa subunit</fullName>
        <shortName evidence="16">TFIIIB50</shortName>
        <shortName evidence="16">hTFIIIB50</shortName>
    </recommendedName>
    <alternativeName>
        <fullName>B-related factor 2</fullName>
        <shortName>BRF-2</shortName>
    </alternativeName>
    <alternativeName>
        <fullName>hBRFU</fullName>
    </alternativeName>
</protein>
<sequence>MPGRGRCPDCGSTELVEDSHYSQSQLVCSDCGCVVTEGVLTTTFSDEGNLREVTYSRSTGENEQVSRSQQRGLRRVRDLCRVLQLPPTFEDTAVAYYQQAYRHSGIRAARLQKKEVLVGCCVLITCRQHNWPLTMGAICTLLYADLDVFSSTYMQIVKLLGLDVPSLCLAELVKTYCSSFKLFQASPSVPAKYVEDKEKMLSRTMQLVELANETWLVTGRHPLPVITAATFLAWQSLQPADRLSCSLARFCKLANVDLPYPASSRLQELLAVLLRMAEQLAWLRVLRLDKRSVVKHIGDLLQHRQSLVRSAFRDGTAEVETREKEPPGWGQGQGEGEVGNNSLGLPQGKRPASPALLLPPCMLKSPKRICPVPPVSTVTGDENISDSEIEQYLRTPQEVRDFQRAQAARQAATSVPNPP</sequence>
<keyword id="KW-0002">3D-structure</keyword>
<keyword id="KW-0010">Activator</keyword>
<keyword id="KW-0025">Alternative splicing</keyword>
<keyword id="KW-0479">Metal-binding</keyword>
<keyword id="KW-0539">Nucleus</keyword>
<keyword id="KW-0558">Oxidation</keyword>
<keyword id="KW-0597">Phosphoprotein</keyword>
<keyword id="KW-1267">Proteomics identification</keyword>
<keyword id="KW-1185">Reference proteome</keyword>
<keyword id="KW-0677">Repeat</keyword>
<keyword id="KW-0346">Stress response</keyword>
<keyword id="KW-0804">Transcription</keyword>
<keyword id="KW-0805">Transcription regulation</keyword>
<keyword id="KW-0862">Zinc</keyword>
<keyword id="KW-0863">Zinc-finger</keyword>
<feature type="chain" id="PRO_0000337187" description="Transcription factor IIIB 50 kDa subunit">
    <location>
        <begin position="1"/>
        <end position="419"/>
    </location>
</feature>
<feature type="repeat" description="1">
    <location>
        <begin position="72"/>
        <end position="157"/>
    </location>
</feature>
<feature type="repeat" description="2">
    <location>
        <begin position="173"/>
        <end position="249"/>
    </location>
</feature>
<feature type="zinc finger region" description="TFIIB-type" evidence="1">
    <location>
        <begin position="2"/>
        <end position="36"/>
    </location>
</feature>
<feature type="region of interest" description="Interaction with target DNA" evidence="14 19 20 21">
    <location>
        <begin position="108"/>
        <end position="114"/>
    </location>
</feature>
<feature type="region of interest" description="Disordered" evidence="2">
    <location>
        <begin position="314"/>
        <end position="351"/>
    </location>
</feature>
<feature type="region of interest" description="Required for the formation of a ternary complex with DNA and TBP; not required for interaction with TBP in the absence of DNA" evidence="14">
    <location>
        <begin position="357"/>
        <end position="363"/>
    </location>
</feature>
<feature type="region of interest" description="Required for interaction with TBP and formation of a ternary complex with DNA and TBP" evidence="14">
    <location>
        <begin position="365"/>
        <end position="419"/>
    </location>
</feature>
<feature type="compositionally biased region" description="Basic and acidic residues" evidence="2">
    <location>
        <begin position="314"/>
        <end position="326"/>
    </location>
</feature>
<feature type="binding site" evidence="1">
    <location>
        <position position="7"/>
    </location>
    <ligand>
        <name>Zn(2+)</name>
        <dbReference type="ChEBI" id="CHEBI:29105"/>
    </ligand>
</feature>
<feature type="binding site" evidence="1">
    <location>
        <position position="10"/>
    </location>
    <ligand>
        <name>Zn(2+)</name>
        <dbReference type="ChEBI" id="CHEBI:29105"/>
    </ligand>
</feature>
<feature type="binding site" evidence="1">
    <location>
        <position position="28"/>
    </location>
    <ligand>
        <name>Zn(2+)</name>
        <dbReference type="ChEBI" id="CHEBI:29105"/>
    </ligand>
</feature>
<feature type="binding site" evidence="1">
    <location>
        <position position="31"/>
    </location>
    <ligand>
        <name>Zn(2+)</name>
        <dbReference type="ChEBI" id="CHEBI:29105"/>
    </ligand>
</feature>
<feature type="modified residue" description="Phosphoserine" evidence="22">
    <location>
        <position position="353"/>
    </location>
</feature>
<feature type="modified residue" description="Cysteine sulfenic acid (-SOH)" evidence="14">
    <location>
        <position position="361"/>
    </location>
</feature>
<feature type="splice variant" id="VSP_056834" description="In isoform 2." evidence="17">
    <location>
        <begin position="10"/>
        <end position="32"/>
    </location>
</feature>
<feature type="mutagenesis site" description="Decreases affinity for DNA." evidence="14">
    <original>R</original>
    <variation>A</variation>
    <location>
        <position position="110"/>
    </location>
</feature>
<feature type="mutagenesis site" description="Abolishes response to oxidative stress. Abolishes the decrease in the formation of a ternary complex with DNA and TBP in response to oxidative stress." evidence="14">
    <original>C</original>
    <variation>A</variation>
    <location>
        <position position="361"/>
    </location>
</feature>
<feature type="mutagenesis site" description="Impairs formation of a ternary complex with DNA and TBP." evidence="14">
    <original>C</original>
    <variation>D</variation>
    <location>
        <position position="361"/>
    </location>
</feature>
<feature type="sequence conflict" description="In Ref. 3; BAA91975." evidence="18" ref="3">
    <original>Y</original>
    <variation>C</variation>
    <location>
        <position position="153"/>
    </location>
</feature>
<feature type="sequence conflict" description="In Ref. 2; AAG35669." evidence="18" ref="2">
    <original>S</original>
    <variation>F</variation>
    <location>
        <position position="376"/>
    </location>
</feature>
<feature type="sequence conflict" description="In Ref. 3; BAG57607." evidence="18" ref="3">
    <original>T</original>
    <variation>I</variation>
    <location>
        <position position="379"/>
    </location>
</feature>
<feature type="strand" evidence="25">
    <location>
        <begin position="8"/>
        <end position="10"/>
    </location>
</feature>
<feature type="strand" evidence="25">
    <location>
        <begin position="15"/>
        <end position="19"/>
    </location>
</feature>
<feature type="strand" evidence="25">
    <location>
        <begin position="24"/>
        <end position="28"/>
    </location>
</feature>
<feature type="turn" evidence="25">
    <location>
        <begin position="29"/>
        <end position="31"/>
    </location>
</feature>
<feature type="strand" evidence="25">
    <location>
        <begin position="33"/>
        <end position="37"/>
    </location>
</feature>
<feature type="helix" evidence="25">
    <location>
        <begin position="44"/>
        <end position="47"/>
    </location>
</feature>
<feature type="turn" evidence="25">
    <location>
        <begin position="55"/>
        <end position="62"/>
    </location>
</feature>
<feature type="helix" evidence="23">
    <location>
        <begin position="67"/>
        <end position="82"/>
    </location>
</feature>
<feature type="helix" evidence="23">
    <location>
        <begin position="87"/>
        <end position="101"/>
    </location>
</feature>
<feature type="helix" evidence="23">
    <location>
        <begin position="104"/>
        <end position="107"/>
    </location>
</feature>
<feature type="helix" evidence="23">
    <location>
        <begin position="111"/>
        <end position="128"/>
    </location>
</feature>
<feature type="helix" evidence="23">
    <location>
        <begin position="135"/>
        <end position="142"/>
    </location>
</feature>
<feature type="helix" evidence="23">
    <location>
        <begin position="146"/>
        <end position="159"/>
    </location>
</feature>
<feature type="helix" evidence="23">
    <location>
        <begin position="169"/>
        <end position="178"/>
    </location>
</feature>
<feature type="helix" evidence="23">
    <location>
        <begin position="191"/>
        <end position="193"/>
    </location>
</feature>
<feature type="helix" evidence="23">
    <location>
        <begin position="197"/>
        <end position="213"/>
    </location>
</feature>
<feature type="strand" evidence="25">
    <location>
        <begin position="217"/>
        <end position="220"/>
    </location>
</feature>
<feature type="helix" evidence="23">
    <location>
        <begin position="223"/>
        <end position="237"/>
    </location>
</feature>
<feature type="helix" evidence="23">
    <location>
        <begin position="239"/>
        <end position="242"/>
    </location>
</feature>
<feature type="helix" evidence="23">
    <location>
        <begin position="247"/>
        <end position="253"/>
    </location>
</feature>
<feature type="helix" evidence="23">
    <location>
        <begin position="262"/>
        <end position="277"/>
    </location>
</feature>
<feature type="helix" evidence="23">
    <location>
        <begin position="281"/>
        <end position="284"/>
    </location>
</feature>
<feature type="turn" evidence="24">
    <location>
        <begin position="285"/>
        <end position="287"/>
    </location>
</feature>
<feature type="turn" evidence="23">
    <location>
        <begin position="290"/>
        <end position="293"/>
    </location>
</feature>
<feature type="helix" evidence="23">
    <location>
        <begin position="294"/>
        <end position="296"/>
    </location>
</feature>
<feature type="helix" evidence="23">
    <location>
        <begin position="297"/>
        <end position="302"/>
    </location>
</feature>
<feature type="helix" evidence="23">
    <location>
        <begin position="304"/>
        <end position="313"/>
    </location>
</feature>
<feature type="turn" evidence="23">
    <location>
        <begin position="360"/>
        <end position="362"/>
    </location>
</feature>
<feature type="strand" evidence="25">
    <location>
        <begin position="367"/>
        <end position="370"/>
    </location>
</feature>
<feature type="helix" evidence="23">
    <location>
        <begin position="386"/>
        <end position="390"/>
    </location>
</feature>
<feature type="helix" evidence="23">
    <location>
        <begin position="396"/>
        <end position="406"/>
    </location>
</feature>
<dbReference type="EMBL" id="AF298153">
    <property type="protein sequence ID" value="AAG30222.1"/>
    <property type="molecule type" value="mRNA"/>
</dbReference>
<dbReference type="EMBL" id="AF206673">
    <property type="protein sequence ID" value="AAG35669.2"/>
    <property type="molecule type" value="mRNA"/>
</dbReference>
<dbReference type="EMBL" id="AK001914">
    <property type="protein sequence ID" value="BAA91975.1"/>
    <property type="molecule type" value="mRNA"/>
</dbReference>
<dbReference type="EMBL" id="AK294337">
    <property type="protein sequence ID" value="BAG57607.1"/>
    <property type="molecule type" value="mRNA"/>
</dbReference>
<dbReference type="EMBL" id="AK315420">
    <property type="protein sequence ID" value="BAG37809.1"/>
    <property type="molecule type" value="mRNA"/>
</dbReference>
<dbReference type="EMBL" id="CH471080">
    <property type="protein sequence ID" value="EAW63351.1"/>
    <property type="molecule type" value="Genomic_DNA"/>
</dbReference>
<dbReference type="EMBL" id="CH471080">
    <property type="protein sequence ID" value="EAW63352.1"/>
    <property type="molecule type" value="Genomic_DNA"/>
</dbReference>
<dbReference type="EMBL" id="CH471080">
    <property type="protein sequence ID" value="EAW63353.1"/>
    <property type="molecule type" value="Genomic_DNA"/>
</dbReference>
<dbReference type="EMBL" id="BC010648">
    <property type="protein sequence ID" value="AAH10648.1"/>
    <property type="molecule type" value="mRNA"/>
</dbReference>
<dbReference type="EMBL" id="AF130058">
    <property type="protein sequence ID" value="AAG35486.1"/>
    <property type="status" value="ALT_INIT"/>
    <property type="molecule type" value="mRNA"/>
</dbReference>
<dbReference type="CCDS" id="CCDS6098.1">
    <molecule id="Q9HAW0-1"/>
</dbReference>
<dbReference type="RefSeq" id="NP_060780.2">
    <molecule id="Q9HAW0-1"/>
    <property type="nucleotide sequence ID" value="NM_018310.3"/>
</dbReference>
<dbReference type="PDB" id="4ROC">
    <property type="method" value="X-ray"/>
    <property type="resolution" value="1.90 A"/>
    <property type="chains" value="A=62-419"/>
</dbReference>
<dbReference type="PDB" id="4ROD">
    <property type="method" value="X-ray"/>
    <property type="resolution" value="2.70 A"/>
    <property type="chains" value="A=62-419"/>
</dbReference>
<dbReference type="PDB" id="4ROE">
    <property type="method" value="X-ray"/>
    <property type="resolution" value="2.20 A"/>
    <property type="chains" value="A=62-419"/>
</dbReference>
<dbReference type="PDB" id="5N9G">
    <property type="method" value="X-ray"/>
    <property type="resolution" value="2.70 A"/>
    <property type="chains" value="A/F=62-419"/>
</dbReference>
<dbReference type="PDB" id="8ITY">
    <property type="method" value="EM"/>
    <property type="resolution" value="3.90 A"/>
    <property type="chains" value="V=1-419"/>
</dbReference>
<dbReference type="PDB" id="8IUE">
    <property type="method" value="EM"/>
    <property type="resolution" value="4.10 A"/>
    <property type="chains" value="V=1-419"/>
</dbReference>
<dbReference type="PDB" id="8IUH">
    <property type="method" value="EM"/>
    <property type="resolution" value="3.40 A"/>
    <property type="chains" value="V=1-419"/>
</dbReference>
<dbReference type="PDB" id="9FSO">
    <property type="method" value="EM"/>
    <property type="resolution" value="3.28 A"/>
    <property type="chains" value="S=1-419"/>
</dbReference>
<dbReference type="PDB" id="9FSP">
    <property type="method" value="EM"/>
    <property type="resolution" value="3.39 A"/>
    <property type="chains" value="S=1-419"/>
</dbReference>
<dbReference type="PDB" id="9FSQ">
    <property type="method" value="EM"/>
    <property type="resolution" value="3.51 A"/>
    <property type="chains" value="S=1-419"/>
</dbReference>
<dbReference type="PDB" id="9FSR">
    <property type="method" value="EM"/>
    <property type="resolution" value="3.76 A"/>
    <property type="chains" value="S=1-419"/>
</dbReference>
<dbReference type="PDB" id="9FSS">
    <property type="method" value="EM"/>
    <property type="resolution" value="4.14 A"/>
    <property type="chains" value="S=1-419"/>
</dbReference>
<dbReference type="PDBsum" id="4ROC"/>
<dbReference type="PDBsum" id="4ROD"/>
<dbReference type="PDBsum" id="4ROE"/>
<dbReference type="PDBsum" id="5N9G"/>
<dbReference type="PDBsum" id="8ITY"/>
<dbReference type="PDBsum" id="8IUE"/>
<dbReference type="PDBsum" id="8IUH"/>
<dbReference type="PDBsum" id="9FSO"/>
<dbReference type="PDBsum" id="9FSP"/>
<dbReference type="PDBsum" id="9FSQ"/>
<dbReference type="PDBsum" id="9FSR"/>
<dbReference type="PDBsum" id="9FSS"/>
<dbReference type="EMDB" id="EMD-35712"/>
<dbReference type="EMDB" id="EMD-35719"/>
<dbReference type="EMDB" id="EMD-35722"/>
<dbReference type="EMDB" id="EMD-50730"/>
<dbReference type="EMDB" id="EMD-50731"/>
<dbReference type="EMDB" id="EMD-50732"/>
<dbReference type="EMDB" id="EMD-50733"/>
<dbReference type="EMDB" id="EMD-50734"/>
<dbReference type="SMR" id="Q9HAW0"/>
<dbReference type="BioGRID" id="120578">
    <property type="interactions" value="39"/>
</dbReference>
<dbReference type="ComplexPortal" id="CPX-2397">
    <property type="entry name" value="General transcription factor TFIII3B complex, BRF2 variant"/>
</dbReference>
<dbReference type="FunCoup" id="Q9HAW0">
    <property type="interactions" value="868"/>
</dbReference>
<dbReference type="IntAct" id="Q9HAW0">
    <property type="interactions" value="7"/>
</dbReference>
<dbReference type="STRING" id="9606.ENSP00000220659"/>
<dbReference type="GlyGen" id="Q9HAW0">
    <property type="glycosylation" value="3 sites, 1 O-linked glycan (3 sites)"/>
</dbReference>
<dbReference type="iPTMnet" id="Q9HAW0"/>
<dbReference type="PhosphoSitePlus" id="Q9HAW0"/>
<dbReference type="BioMuta" id="BRF2"/>
<dbReference type="DMDM" id="74734246"/>
<dbReference type="jPOST" id="Q9HAW0"/>
<dbReference type="MassIVE" id="Q9HAW0"/>
<dbReference type="PaxDb" id="9606-ENSP00000220659"/>
<dbReference type="PeptideAtlas" id="Q9HAW0"/>
<dbReference type="ProteomicsDB" id="81450">
    <molecule id="Q9HAW0-1"/>
</dbReference>
<dbReference type="Pumba" id="Q9HAW0"/>
<dbReference type="Antibodypedia" id="10831">
    <property type="antibodies" value="127 antibodies from 26 providers"/>
</dbReference>
<dbReference type="DNASU" id="55290"/>
<dbReference type="Ensembl" id="ENST00000220659.11">
    <molecule id="Q9HAW0-1"/>
    <property type="protein sequence ID" value="ENSP00000220659.6"/>
    <property type="gene ID" value="ENSG00000104221.14"/>
</dbReference>
<dbReference type="GeneID" id="55290"/>
<dbReference type="KEGG" id="hsa:55290"/>
<dbReference type="MANE-Select" id="ENST00000220659.11">
    <property type="protein sequence ID" value="ENSP00000220659.6"/>
    <property type="RefSeq nucleotide sequence ID" value="NM_018310.4"/>
    <property type="RefSeq protein sequence ID" value="NP_060780.2"/>
</dbReference>
<dbReference type="UCSC" id="uc003xkk.4">
    <molecule id="Q9HAW0-1"/>
    <property type="organism name" value="human"/>
</dbReference>
<dbReference type="AGR" id="HGNC:17298"/>
<dbReference type="CTD" id="55290"/>
<dbReference type="DisGeNET" id="55290"/>
<dbReference type="GeneCards" id="BRF2"/>
<dbReference type="HGNC" id="HGNC:17298">
    <property type="gene designation" value="BRF2"/>
</dbReference>
<dbReference type="HPA" id="ENSG00000104221">
    <property type="expression patterns" value="Low tissue specificity"/>
</dbReference>
<dbReference type="MalaCards" id="BRF2"/>
<dbReference type="MIM" id="607013">
    <property type="type" value="gene"/>
</dbReference>
<dbReference type="neXtProt" id="NX_Q9HAW0"/>
<dbReference type="OpenTargets" id="ENSG00000104221"/>
<dbReference type="PharmGKB" id="PA164741329"/>
<dbReference type="VEuPathDB" id="HostDB:ENSG00000104221"/>
<dbReference type="eggNOG" id="KOG1598">
    <property type="taxonomic scope" value="Eukaryota"/>
</dbReference>
<dbReference type="GeneTree" id="ENSGT00390000002288"/>
<dbReference type="HOGENOM" id="CLU_039947_0_0_1"/>
<dbReference type="InParanoid" id="Q9HAW0"/>
<dbReference type="OMA" id="DLPHPAY"/>
<dbReference type="OrthoDB" id="2121711at2759"/>
<dbReference type="PAN-GO" id="Q9HAW0">
    <property type="GO annotations" value="4 GO annotations based on evolutionary models"/>
</dbReference>
<dbReference type="PhylomeDB" id="Q9HAW0"/>
<dbReference type="TreeFam" id="TF331596"/>
<dbReference type="PathwayCommons" id="Q9HAW0"/>
<dbReference type="Reactome" id="R-HSA-749476">
    <property type="pathway name" value="RNA Polymerase III Abortive And Retractive Initiation"/>
</dbReference>
<dbReference type="Reactome" id="R-HSA-76071">
    <property type="pathway name" value="RNA Polymerase III Transcription Initiation From Type 3 Promoter"/>
</dbReference>
<dbReference type="SignaLink" id="Q9HAW0"/>
<dbReference type="SIGNOR" id="Q9HAW0"/>
<dbReference type="BioGRID-ORCS" id="55290">
    <property type="hits" value="818 hits in 1161 CRISPR screens"/>
</dbReference>
<dbReference type="ChiTaRS" id="BRF2">
    <property type="organism name" value="human"/>
</dbReference>
<dbReference type="EvolutionaryTrace" id="Q9HAW0"/>
<dbReference type="GeneWiki" id="BRF2_(gene)"/>
<dbReference type="GenomeRNAi" id="55290"/>
<dbReference type="Pharos" id="Q9HAW0">
    <property type="development level" value="Tbio"/>
</dbReference>
<dbReference type="PRO" id="PR:Q9HAW0"/>
<dbReference type="Proteomes" id="UP000005640">
    <property type="component" value="Chromosome 8"/>
</dbReference>
<dbReference type="RNAct" id="Q9HAW0">
    <property type="molecule type" value="protein"/>
</dbReference>
<dbReference type="Bgee" id="ENSG00000104221">
    <property type="expression patterns" value="Expressed in skeletal muscle tissue of rectus abdominis and 206 other cell types or tissues"/>
</dbReference>
<dbReference type="ExpressionAtlas" id="Q9HAW0">
    <property type="expression patterns" value="baseline and differential"/>
</dbReference>
<dbReference type="GO" id="GO:0005654">
    <property type="term" value="C:nucleoplasm"/>
    <property type="evidence" value="ECO:0000304"/>
    <property type="project" value="Reactome"/>
</dbReference>
<dbReference type="GO" id="GO:0005634">
    <property type="term" value="C:nucleus"/>
    <property type="evidence" value="ECO:0000318"/>
    <property type="project" value="GO_Central"/>
</dbReference>
<dbReference type="GO" id="GO:0000126">
    <property type="term" value="C:transcription factor TFIIIB complex"/>
    <property type="evidence" value="ECO:0000315"/>
    <property type="project" value="UniProtKB"/>
</dbReference>
<dbReference type="GO" id="GO:0097550">
    <property type="term" value="C:transcription preinitiation complex"/>
    <property type="evidence" value="ECO:0000318"/>
    <property type="project" value="GO_Central"/>
</dbReference>
<dbReference type="GO" id="GO:0016251">
    <property type="term" value="F:RNA polymerase II general transcription initiation factor activity"/>
    <property type="evidence" value="ECO:0000318"/>
    <property type="project" value="GO_Central"/>
</dbReference>
<dbReference type="GO" id="GO:0001006">
    <property type="term" value="F:RNA polymerase III type 3 promoter sequence-specific DNA binding"/>
    <property type="evidence" value="ECO:0000314"/>
    <property type="project" value="UniProtKB"/>
</dbReference>
<dbReference type="GO" id="GO:0017025">
    <property type="term" value="F:TBP-class protein binding"/>
    <property type="evidence" value="ECO:0000318"/>
    <property type="project" value="GO_Central"/>
</dbReference>
<dbReference type="GO" id="GO:0008270">
    <property type="term" value="F:zinc ion binding"/>
    <property type="evidence" value="ECO:0007669"/>
    <property type="project" value="UniProtKB-KW"/>
</dbReference>
<dbReference type="GO" id="GO:0034599">
    <property type="term" value="P:cellular response to oxidative stress"/>
    <property type="evidence" value="ECO:0000315"/>
    <property type="project" value="UniProtKB"/>
</dbReference>
<dbReference type="GO" id="GO:0006359">
    <property type="term" value="P:regulation of transcription by RNA polymerase III"/>
    <property type="evidence" value="ECO:0000315"/>
    <property type="project" value="UniProtKB"/>
</dbReference>
<dbReference type="GO" id="GO:0070897">
    <property type="term" value="P:transcription preinitiation complex assembly"/>
    <property type="evidence" value="ECO:0007669"/>
    <property type="project" value="InterPro"/>
</dbReference>
<dbReference type="CDD" id="cd20555">
    <property type="entry name" value="CYCLIN_BRF2"/>
    <property type="match status" value="1"/>
</dbReference>
<dbReference type="FunFam" id="1.10.472.10:FF:000046">
    <property type="entry name" value="Transcription factor IIIB 50 kDa subunit"/>
    <property type="match status" value="1"/>
</dbReference>
<dbReference type="FunFam" id="2.20.25.10:FF:000014">
    <property type="entry name" value="Transcription factor IIIB 50 kDa subunit"/>
    <property type="match status" value="1"/>
</dbReference>
<dbReference type="Gene3D" id="2.20.25.10">
    <property type="match status" value="1"/>
</dbReference>
<dbReference type="Gene3D" id="1.10.472.10">
    <property type="entry name" value="Cyclin-like"/>
    <property type="match status" value="2"/>
</dbReference>
<dbReference type="InterPro" id="IPR054078">
    <property type="entry name" value="BRF2-like_C"/>
</dbReference>
<dbReference type="InterPro" id="IPR036915">
    <property type="entry name" value="Cyclin-like_sf"/>
</dbReference>
<dbReference type="InterPro" id="IPR000812">
    <property type="entry name" value="TFIIB"/>
</dbReference>
<dbReference type="InterPro" id="IPR013137">
    <property type="entry name" value="Znf_TFIIB"/>
</dbReference>
<dbReference type="PANTHER" id="PTHR11618:SF5">
    <property type="entry name" value="TRANSCRIPTION FACTOR IIIB 50 KDA SUBUNIT"/>
    <property type="match status" value="1"/>
</dbReference>
<dbReference type="PANTHER" id="PTHR11618">
    <property type="entry name" value="TRANSCRIPTION INITIATION FACTOR IIB-RELATED"/>
    <property type="match status" value="1"/>
</dbReference>
<dbReference type="Pfam" id="PF21886">
    <property type="entry name" value="BRF2-like_C_cyclin_rpt"/>
    <property type="match status" value="1"/>
</dbReference>
<dbReference type="Pfam" id="PF08271">
    <property type="entry name" value="Zn_Ribbon_TF"/>
    <property type="match status" value="1"/>
</dbReference>
<dbReference type="SUPFAM" id="SSF47954">
    <property type="entry name" value="Cyclin-like"/>
    <property type="match status" value="1"/>
</dbReference>
<dbReference type="SUPFAM" id="SSF57783">
    <property type="entry name" value="Zinc beta-ribbon"/>
    <property type="match status" value="1"/>
</dbReference>
<dbReference type="PROSITE" id="PS51134">
    <property type="entry name" value="ZF_TFIIB"/>
    <property type="match status" value="1"/>
</dbReference>
<reference key="1">
    <citation type="journal article" date="2000" name="Genes Dev.">
        <title>Different human TFIIIB activities direct RNA polymerase III transcription from TATA-containing and TATA-less promoters.</title>
        <authorList>
            <person name="Schramm L."/>
            <person name="Pendergrast P.S."/>
            <person name="Sun Y."/>
            <person name="Hernandez N."/>
        </authorList>
    </citation>
    <scope>NUCLEOTIDE SEQUENCE [MRNA] (ISOFORM 1)</scope>
    <scope>FUNCTION</scope>
</reference>
<reference key="2">
    <citation type="journal article" date="2000" name="Proc. Natl. Acad. Sci. U.S.A.">
        <title>A stable complex of a novel transcription factor IIB- related factor, human TFIIIB50, and associated proteins mediate selective transcription by RNA polymerase III of genes with upstream promoter elements.</title>
        <authorList>
            <person name="Teichmann M."/>
            <person name="Wang Z."/>
            <person name="Roeder R.G."/>
        </authorList>
    </citation>
    <scope>NUCLEOTIDE SEQUENCE [MRNA] (ISOFORM 1)</scope>
    <scope>FUNCTION</scope>
</reference>
<reference key="3">
    <citation type="journal article" date="2004" name="Nat. Genet.">
        <title>Complete sequencing and characterization of 21,243 full-length human cDNAs.</title>
        <authorList>
            <person name="Ota T."/>
            <person name="Suzuki Y."/>
            <person name="Nishikawa T."/>
            <person name="Otsuki T."/>
            <person name="Sugiyama T."/>
            <person name="Irie R."/>
            <person name="Wakamatsu A."/>
            <person name="Hayashi K."/>
            <person name="Sato H."/>
            <person name="Nagai K."/>
            <person name="Kimura K."/>
            <person name="Makita H."/>
            <person name="Sekine M."/>
            <person name="Obayashi M."/>
            <person name="Nishi T."/>
            <person name="Shibahara T."/>
            <person name="Tanaka T."/>
            <person name="Ishii S."/>
            <person name="Yamamoto J."/>
            <person name="Saito K."/>
            <person name="Kawai Y."/>
            <person name="Isono Y."/>
            <person name="Nakamura Y."/>
            <person name="Nagahari K."/>
            <person name="Murakami K."/>
            <person name="Yasuda T."/>
            <person name="Iwayanagi T."/>
            <person name="Wagatsuma M."/>
            <person name="Shiratori A."/>
            <person name="Sudo H."/>
            <person name="Hosoiri T."/>
            <person name="Kaku Y."/>
            <person name="Kodaira H."/>
            <person name="Kondo H."/>
            <person name="Sugawara M."/>
            <person name="Takahashi M."/>
            <person name="Kanda K."/>
            <person name="Yokoi T."/>
            <person name="Furuya T."/>
            <person name="Kikkawa E."/>
            <person name="Omura Y."/>
            <person name="Abe K."/>
            <person name="Kamihara K."/>
            <person name="Katsuta N."/>
            <person name="Sato K."/>
            <person name="Tanikawa M."/>
            <person name="Yamazaki M."/>
            <person name="Ninomiya K."/>
            <person name="Ishibashi T."/>
            <person name="Yamashita H."/>
            <person name="Murakawa K."/>
            <person name="Fujimori K."/>
            <person name="Tanai H."/>
            <person name="Kimata M."/>
            <person name="Watanabe M."/>
            <person name="Hiraoka S."/>
            <person name="Chiba Y."/>
            <person name="Ishida S."/>
            <person name="Ono Y."/>
            <person name="Takiguchi S."/>
            <person name="Watanabe S."/>
            <person name="Yosida M."/>
            <person name="Hotuta T."/>
            <person name="Kusano J."/>
            <person name="Kanehori K."/>
            <person name="Takahashi-Fujii A."/>
            <person name="Hara H."/>
            <person name="Tanase T.-O."/>
            <person name="Nomura Y."/>
            <person name="Togiya S."/>
            <person name="Komai F."/>
            <person name="Hara R."/>
            <person name="Takeuchi K."/>
            <person name="Arita M."/>
            <person name="Imose N."/>
            <person name="Musashino K."/>
            <person name="Yuuki H."/>
            <person name="Oshima A."/>
            <person name="Sasaki N."/>
            <person name="Aotsuka S."/>
            <person name="Yoshikawa Y."/>
            <person name="Matsunawa H."/>
            <person name="Ichihara T."/>
            <person name="Shiohata N."/>
            <person name="Sano S."/>
            <person name="Moriya S."/>
            <person name="Momiyama H."/>
            <person name="Satoh N."/>
            <person name="Takami S."/>
            <person name="Terashima Y."/>
            <person name="Suzuki O."/>
            <person name="Nakagawa S."/>
            <person name="Senoh A."/>
            <person name="Mizoguchi H."/>
            <person name="Goto Y."/>
            <person name="Shimizu F."/>
            <person name="Wakebe H."/>
            <person name="Hishigaki H."/>
            <person name="Watanabe T."/>
            <person name="Sugiyama A."/>
            <person name="Takemoto M."/>
            <person name="Kawakami B."/>
            <person name="Yamazaki M."/>
            <person name="Watanabe K."/>
            <person name="Kumagai A."/>
            <person name="Itakura S."/>
            <person name="Fukuzumi Y."/>
            <person name="Fujimori Y."/>
            <person name="Komiyama M."/>
            <person name="Tashiro H."/>
            <person name="Tanigami A."/>
            <person name="Fujiwara T."/>
            <person name="Ono T."/>
            <person name="Yamada K."/>
            <person name="Fujii Y."/>
            <person name="Ozaki K."/>
            <person name="Hirao M."/>
            <person name="Ohmori Y."/>
            <person name="Kawabata A."/>
            <person name="Hikiji T."/>
            <person name="Kobatake N."/>
            <person name="Inagaki H."/>
            <person name="Ikema Y."/>
            <person name="Okamoto S."/>
            <person name="Okitani R."/>
            <person name="Kawakami T."/>
            <person name="Noguchi S."/>
            <person name="Itoh T."/>
            <person name="Shigeta K."/>
            <person name="Senba T."/>
            <person name="Matsumura K."/>
            <person name="Nakajima Y."/>
            <person name="Mizuno T."/>
            <person name="Morinaga M."/>
            <person name="Sasaki M."/>
            <person name="Togashi T."/>
            <person name="Oyama M."/>
            <person name="Hata H."/>
            <person name="Watanabe M."/>
            <person name="Komatsu T."/>
            <person name="Mizushima-Sugano J."/>
            <person name="Satoh T."/>
            <person name="Shirai Y."/>
            <person name="Takahashi Y."/>
            <person name="Nakagawa K."/>
            <person name="Okumura K."/>
            <person name="Nagase T."/>
            <person name="Nomura N."/>
            <person name="Kikuchi H."/>
            <person name="Masuho Y."/>
            <person name="Yamashita R."/>
            <person name="Nakai K."/>
            <person name="Yada T."/>
            <person name="Nakamura Y."/>
            <person name="Ohara O."/>
            <person name="Isogai T."/>
            <person name="Sugano S."/>
        </authorList>
    </citation>
    <scope>NUCLEOTIDE SEQUENCE [LARGE SCALE MRNA] (ISOFORMS 1 AND 2)</scope>
    <source>
        <tissue>Amygdala</tissue>
        <tissue>Placenta</tissue>
        <tissue>Umbilical cord blood</tissue>
    </source>
</reference>
<reference key="4">
    <citation type="submission" date="2005-09" db="EMBL/GenBank/DDBJ databases">
        <authorList>
            <person name="Mural R.J."/>
            <person name="Istrail S."/>
            <person name="Sutton G.G."/>
            <person name="Florea L."/>
            <person name="Halpern A.L."/>
            <person name="Mobarry C.M."/>
            <person name="Lippert R."/>
            <person name="Walenz B."/>
            <person name="Shatkay H."/>
            <person name="Dew I."/>
            <person name="Miller J.R."/>
            <person name="Flanigan M.J."/>
            <person name="Edwards N.J."/>
            <person name="Bolanos R."/>
            <person name="Fasulo D."/>
            <person name="Halldorsson B.V."/>
            <person name="Hannenhalli S."/>
            <person name="Turner R."/>
            <person name="Yooseph S."/>
            <person name="Lu F."/>
            <person name="Nusskern D.R."/>
            <person name="Shue B.C."/>
            <person name="Zheng X.H."/>
            <person name="Zhong F."/>
            <person name="Delcher A.L."/>
            <person name="Huson D.H."/>
            <person name="Kravitz S.A."/>
            <person name="Mouchard L."/>
            <person name="Reinert K."/>
            <person name="Remington K.A."/>
            <person name="Clark A.G."/>
            <person name="Waterman M.S."/>
            <person name="Eichler E.E."/>
            <person name="Adams M.D."/>
            <person name="Hunkapiller M.W."/>
            <person name="Myers E.W."/>
            <person name="Venter J.C."/>
        </authorList>
    </citation>
    <scope>NUCLEOTIDE SEQUENCE [LARGE SCALE GENOMIC DNA]</scope>
</reference>
<reference key="5">
    <citation type="journal article" date="2004" name="Genome Res.">
        <title>The status, quality, and expansion of the NIH full-length cDNA project: the Mammalian Gene Collection (MGC).</title>
        <authorList>
            <consortium name="The MGC Project Team"/>
        </authorList>
    </citation>
    <scope>NUCLEOTIDE SEQUENCE [LARGE SCALE MRNA] (ISOFORM 1)</scope>
    <source>
        <tissue>Eye</tissue>
    </source>
</reference>
<reference key="6">
    <citation type="journal article" date="2001" name="Genome Res.">
        <title>Gene expression profiling in human fetal liver and identification of tissue- and developmental-stage-specific genes through compiled expression profiles and efficient cloning of full-length cDNAs.</title>
        <authorList>
            <person name="Yu Y."/>
            <person name="Zhang C."/>
            <person name="Zhou G."/>
            <person name="Wu S."/>
            <person name="Qu X."/>
            <person name="Wei H."/>
            <person name="Xing G."/>
            <person name="Dong C."/>
            <person name="Zhai Y."/>
            <person name="Wan J."/>
            <person name="Ouyang S."/>
            <person name="Li L."/>
            <person name="Zhang S."/>
            <person name="Zhou K."/>
            <person name="Zhang Y."/>
            <person name="Wu C."/>
            <person name="He F."/>
        </authorList>
    </citation>
    <scope>NUCLEOTIDE SEQUENCE [LARGE SCALE MRNA] OF 264-419 (ISOFORM 1)</scope>
    <source>
        <tissue>Fetal liver</tissue>
    </source>
</reference>
<reference key="7">
    <citation type="journal article" date="2001" name="J. Biol. Chem.">
        <title>BRFU, a TFIIB-like factor, is directly recruited to the TATA-box of polymerase III small nuclear RNA gene promoters through its interaction with TATA-binding protein.</title>
        <authorList>
            <person name="Cabart P."/>
            <person name="Murphy S."/>
        </authorList>
    </citation>
    <scope>FUNCTION</scope>
    <scope>INTERACTION WITH TBP</scope>
</reference>
<reference key="8">
    <citation type="journal article" date="2002" name="J. Biol. Chem.">
        <title>Assembly of human small nuclear RNA gene-specific transcription factor IIIB complex de novo on and off promoter.</title>
        <authorList>
            <person name="Cabart P."/>
            <person name="Murphy S."/>
        </authorList>
    </citation>
    <scope>IDENTIFICATION IN THE TFIIIB-ALPHA COMPLEX</scope>
</reference>
<reference key="9">
    <citation type="journal article" date="2002" name="Mol. Cell. Biol.">
        <title>Redundant cooperative interactions for assembly of a human U6 transcription initiation complex.</title>
        <authorList>
            <person name="Ma B."/>
            <person name="Hernandez N."/>
        </authorList>
    </citation>
    <scope>SUBUNIT</scope>
</reference>
<reference key="10">
    <citation type="journal article" date="2003" name="J. Biol. Chem.">
        <title>The small nuclear RNA-activating protein 190 Myb DNA binding domain stimulates TATA box-binding protein-TATA box recognition.</title>
        <authorList>
            <person name="Hinkley C.S."/>
            <person name="Hirsch H.A."/>
            <person name="Gu L."/>
            <person name="LaMere B."/>
            <person name="Henry R.W."/>
        </authorList>
    </citation>
    <scope>INTERACTION WITH SNAPC4</scope>
    <scope>SUBUNIT</scope>
</reference>
<reference key="11">
    <citation type="journal article" date="2003" name="Mol. Cell">
        <title>A minimal RNA polymerase III transcription system from human cells reveals positive and negative regulatory roles for CK2.</title>
        <authorList>
            <person name="Hu P."/>
            <person name="Wu S."/>
            <person name="Hernandez N."/>
        </authorList>
    </citation>
    <scope>SUBUNIT</scope>
</reference>
<reference key="12">
    <citation type="journal article" date="2005" name="Mol. Cell. Biol.">
        <title>Structure-function analysis of the human TFIIB-related factor II protein reveals an essential role for the C-terminal domain in RNA polymerase III transcription.</title>
        <authorList>
            <person name="Saxena A."/>
            <person name="Ma B."/>
            <person name="Schramm L."/>
            <person name="Hernandez N."/>
        </authorList>
    </citation>
    <scope>SUBUNIT</scope>
</reference>
<reference key="13">
    <citation type="journal article" date="2006" name="Gene">
        <title>A role for Yin Yang-1 (YY1) in the assembly of snRNA transcription complexes.</title>
        <authorList>
            <person name="Emran F."/>
            <person name="Florens L."/>
            <person name="Ma B."/>
            <person name="Swanson S.K."/>
            <person name="Washburn M.P."/>
            <person name="Hernandez N."/>
        </authorList>
    </citation>
    <scope>SUBUNIT</scope>
</reference>
<reference key="14">
    <citation type="journal article" date="2007" name="Int. J. Biol. Sci.">
        <title>Human Maf1 negatively regulates RNA polymerase III transcription via the TFIIB family members Brf1 and Brf2.</title>
        <authorList>
            <person name="Rollins J."/>
            <person name="Veras I."/>
            <person name="Cabarcas S."/>
            <person name="Willis I."/>
            <person name="Schramm L."/>
        </authorList>
    </citation>
    <scope>INTERACTION WITH MAF1</scope>
    <scope>SUBCELLULAR LOCATION</scope>
</reference>
<reference key="15">
    <citation type="journal article" date="2007" name="Biochem. Biophys. Res. Commun.">
        <title>The green tea component EGCG inhibits RNA polymerase III transcription.</title>
        <authorList>
            <person name="Jacob J."/>
            <person name="Cabarcas S."/>
            <person name="Veras I."/>
            <person name="Zaveri N."/>
            <person name="Schramm L."/>
        </authorList>
    </citation>
    <scope>INDUCTION</scope>
</reference>
<reference key="16">
    <citation type="journal article" date="2008" name="Proc. Natl. Acad. Sci. U.S.A.">
        <title>A quantitative atlas of mitotic phosphorylation.</title>
        <authorList>
            <person name="Dephoure N."/>
            <person name="Zhou C."/>
            <person name="Villen J."/>
            <person name="Beausoleil S.A."/>
            <person name="Bakalarski C.E."/>
            <person name="Elledge S.J."/>
            <person name="Gygi S.P."/>
        </authorList>
    </citation>
    <scope>IDENTIFICATION BY MASS SPECTROMETRY [LARGE SCALE ANALYSIS]</scope>
    <source>
        <tissue>Cervix carcinoma</tissue>
    </source>
</reference>
<reference key="17">
    <citation type="journal article" date="2013" name="J. Proteome Res.">
        <title>Toward a comprehensive characterization of a human cancer cell phosphoproteome.</title>
        <authorList>
            <person name="Zhou H."/>
            <person name="Di Palma S."/>
            <person name="Preisinger C."/>
            <person name="Peng M."/>
            <person name="Polat A.N."/>
            <person name="Heck A.J."/>
            <person name="Mohammed S."/>
        </authorList>
    </citation>
    <scope>PHOSPHORYLATION [LARGE SCALE ANALYSIS] AT SER-353</scope>
    <scope>IDENTIFICATION BY MASS SPECTROMETRY [LARGE SCALE ANALYSIS]</scope>
    <source>
        <tissue>Erythroleukemia</tissue>
    </source>
</reference>
<reference evidence="19 20 21" key="18">
    <citation type="journal article" date="2015" name="Cell">
        <title>Redox signaling by the RNA polymerase III TFIIB-related factor Brf2.</title>
        <authorList>
            <person name="Gouge J."/>
            <person name="Satia K."/>
            <person name="Guthertz N."/>
            <person name="Widya M."/>
            <person name="Thompson A.J."/>
            <person name="Cousin P."/>
            <person name="Dergai O."/>
            <person name="Hernandez N."/>
            <person name="Vannini A."/>
        </authorList>
    </citation>
    <scope>X-RAY CRYSTALLOGRAPHY (1.90 ANGSTROMS) OF 62-419 IN COMPLEX WITH TBP AND DNA</scope>
    <scope>FUNCTION</scope>
    <scope>INTERACTION WITH TBP</scope>
    <scope>SUBUNIT</scope>
    <scope>DNA-BINDING</scope>
    <scope>MUTAGENESIS OF ARG-110 AND CYS-361</scope>
    <scope>OXIDATION AT CYS-361</scope>
    <scope>IDENTIFICATION BY MASS SPECTROMETRY</scope>
</reference>
<accession>Q9HAW0</accession>
<accession>B2RD62</accession>
<accession>B4DFZ6</accession>
<accession>D3DSW6</accession>
<accession>Q9H2Y3</accession>
<accession>Q9H3B3</accession>
<accession>Q9NUY6</accession>
<proteinExistence type="evidence at protein level"/>
<gene>
    <name type="primary">BRF2</name>
    <name evidence="15" type="synonym">BRFU</name>
    <name type="ORF">PRO1470</name>
</gene>
<evidence type="ECO:0000255" key="1">
    <source>
        <dbReference type="PROSITE-ProRule" id="PRU00469"/>
    </source>
</evidence>
<evidence type="ECO:0000256" key="2">
    <source>
        <dbReference type="SAM" id="MobiDB-lite"/>
    </source>
</evidence>
<evidence type="ECO:0000269" key="3">
    <source>
    </source>
</evidence>
<evidence type="ECO:0000269" key="4">
    <source>
    </source>
</evidence>
<evidence type="ECO:0000269" key="5">
    <source>
    </source>
</evidence>
<evidence type="ECO:0000269" key="6">
    <source>
    </source>
</evidence>
<evidence type="ECO:0000269" key="7">
    <source>
    </source>
</evidence>
<evidence type="ECO:0000269" key="8">
    <source>
    </source>
</evidence>
<evidence type="ECO:0000269" key="9">
    <source>
    </source>
</evidence>
<evidence type="ECO:0000269" key="10">
    <source>
    </source>
</evidence>
<evidence type="ECO:0000269" key="11">
    <source>
    </source>
</evidence>
<evidence type="ECO:0000269" key="12">
    <source>
    </source>
</evidence>
<evidence type="ECO:0000269" key="13">
    <source>
    </source>
</evidence>
<evidence type="ECO:0000269" key="14">
    <source>
    </source>
</evidence>
<evidence type="ECO:0000303" key="15">
    <source>
    </source>
</evidence>
<evidence type="ECO:0000303" key="16">
    <source>
    </source>
</evidence>
<evidence type="ECO:0000303" key="17">
    <source>
    </source>
</evidence>
<evidence type="ECO:0000305" key="18"/>
<evidence type="ECO:0007744" key="19">
    <source>
        <dbReference type="PDB" id="4ROC"/>
    </source>
</evidence>
<evidence type="ECO:0007744" key="20">
    <source>
        <dbReference type="PDB" id="4ROD"/>
    </source>
</evidence>
<evidence type="ECO:0007744" key="21">
    <source>
        <dbReference type="PDB" id="4ROE"/>
    </source>
</evidence>
<evidence type="ECO:0007744" key="22">
    <source>
    </source>
</evidence>
<evidence type="ECO:0007829" key="23">
    <source>
        <dbReference type="PDB" id="4ROC"/>
    </source>
</evidence>
<evidence type="ECO:0007829" key="24">
    <source>
        <dbReference type="PDB" id="4ROE"/>
    </source>
</evidence>
<evidence type="ECO:0007829" key="25">
    <source>
        <dbReference type="PDB" id="8IUH"/>
    </source>
</evidence>
<organism>
    <name type="scientific">Homo sapiens</name>
    <name type="common">Human</name>
    <dbReference type="NCBI Taxonomy" id="9606"/>
    <lineage>
        <taxon>Eukaryota</taxon>
        <taxon>Metazoa</taxon>
        <taxon>Chordata</taxon>
        <taxon>Craniata</taxon>
        <taxon>Vertebrata</taxon>
        <taxon>Euteleostomi</taxon>
        <taxon>Mammalia</taxon>
        <taxon>Eutheria</taxon>
        <taxon>Euarchontoglires</taxon>
        <taxon>Primates</taxon>
        <taxon>Haplorrhini</taxon>
        <taxon>Catarrhini</taxon>
        <taxon>Hominidae</taxon>
        <taxon>Homo</taxon>
    </lineage>
</organism>